<reference key="1">
    <citation type="journal article" date="1993" name="Cell">
        <title>A mating type-linked gene cluster expressed in Chlamydomonas zygotes participates in the uniparental inheritance of the chloroplast genome.</title>
        <authorList>
            <person name="Armbrust E.V."/>
            <person name="Ferris P.J."/>
            <person name="Goodenough U.W."/>
        </authorList>
    </citation>
    <scope>NUCLEOTIDE SEQUENCE [MRNA]</scope>
</reference>
<name>EZY2_CHLRE</name>
<evidence type="ECO:0000255" key="1"/>
<evidence type="ECO:0000256" key="2">
    <source>
        <dbReference type="SAM" id="MobiDB-lite"/>
    </source>
</evidence>
<keyword id="KW-0732">Signal</keyword>
<organism>
    <name type="scientific">Chlamydomonas reinhardtii</name>
    <name type="common">Chlamydomonas smithii</name>
    <dbReference type="NCBI Taxonomy" id="3055"/>
    <lineage>
        <taxon>Eukaryota</taxon>
        <taxon>Viridiplantae</taxon>
        <taxon>Chlorophyta</taxon>
        <taxon>core chlorophytes</taxon>
        <taxon>Chlorophyceae</taxon>
        <taxon>CS clade</taxon>
        <taxon>Chlamydomonadales</taxon>
        <taxon>Chlamydomonadaceae</taxon>
        <taxon>Chlamydomonas</taxon>
    </lineage>
</organism>
<proteinExistence type="evidence at transcript level"/>
<accession>Q08355</accession>
<sequence length="456" mass="48037">MQLSSSLRSARSAAASSGCALASRPVVACRRVTPSVTRPGPFTIATGPLLPASRSKAGGGIRVFSSALYEFGQQLKEDLEHDLSRARVDAITNKTRIAELEQQRRILMAVGGMADDEPELKAALMQLEEILGVSFNELQLMLAETLADHPAKMDNLAAMAAVVGTGSDGGGDESGDRRTADAADADGDGDGGERAWLRFKADVRACLADLRNRKGGITLHRAIVKDMVSASSNPGARRSSSSVDKMAREELDRLMPFLLDDFLDNMPGLKAAFTGKAEPGAEGDDGEDEEEGEAQGVGEDAVDSSSGGSGGGGVLSCTAWQQVLGRTVPASSPTLALVLARGYLAMAPRQYRALALVRMILPGKTGGGVDGALTRKEGLSLLKKLRPGISGLADKDKQWLEWVIARLAAEFAVQPAGDGHEPEPKRPELPPTAVQREPPAEEQHKPTAGARDSPNM</sequence>
<protein>
    <recommendedName>
        <fullName>Ezy-1 protein</fullName>
    </recommendedName>
</protein>
<dbReference type="EMBL" id="L20946">
    <property type="protein sequence ID" value="AAC37350.1"/>
    <property type="molecule type" value="mRNA"/>
</dbReference>
<dbReference type="PIR" id="A48210">
    <property type="entry name" value="A48210"/>
</dbReference>
<dbReference type="PIR" id="B48210">
    <property type="entry name" value="B48210"/>
</dbReference>
<dbReference type="PIR" id="C48210">
    <property type="entry name" value="C48210"/>
</dbReference>
<gene>
    <name type="primary">Ezy-1</name>
</gene>
<feature type="signal peptide" evidence="1">
    <location>
        <begin position="1"/>
        <end position="28"/>
    </location>
</feature>
<feature type="chain" id="PRO_0000021221" description="Ezy-1 protein">
    <location>
        <begin position="29"/>
        <end position="456"/>
    </location>
</feature>
<feature type="region of interest" description="Disordered" evidence="2">
    <location>
        <begin position="167"/>
        <end position="189"/>
    </location>
</feature>
<feature type="region of interest" description="Disordered" evidence="2">
    <location>
        <begin position="273"/>
        <end position="310"/>
    </location>
</feature>
<feature type="region of interest" description="Disordered" evidence="2">
    <location>
        <begin position="414"/>
        <end position="456"/>
    </location>
</feature>
<feature type="compositionally biased region" description="Acidic residues" evidence="2">
    <location>
        <begin position="281"/>
        <end position="293"/>
    </location>
</feature>
<feature type="compositionally biased region" description="Basic and acidic residues" evidence="2">
    <location>
        <begin position="418"/>
        <end position="428"/>
    </location>
</feature>